<evidence type="ECO:0000250" key="1"/>
<evidence type="ECO:0000250" key="2">
    <source>
        <dbReference type="UniProtKB" id="P60203"/>
    </source>
</evidence>
<evidence type="ECO:0000255" key="3"/>
<evidence type="ECO:0000305" key="4"/>
<protein>
    <recommendedName>
        <fullName>Myelin proteolipid protein</fullName>
        <shortName>PLP</shortName>
    </recommendedName>
    <alternativeName>
        <fullName>Lipophilin</fullName>
    </alternativeName>
</protein>
<dbReference type="EMBL" id="AB083324">
    <property type="protein sequence ID" value="BAC20603.1"/>
    <property type="molecule type" value="mRNA"/>
</dbReference>
<dbReference type="SMR" id="Q8HXW7"/>
<dbReference type="STRING" id="9541.ENSMFAP00000043219"/>
<dbReference type="eggNOG" id="KOG4800">
    <property type="taxonomic scope" value="Eukaryota"/>
</dbReference>
<dbReference type="Proteomes" id="UP000233100">
    <property type="component" value="Unplaced"/>
</dbReference>
<dbReference type="GO" id="GO:0043209">
    <property type="term" value="C:myelin sheath"/>
    <property type="evidence" value="ECO:0007669"/>
    <property type="project" value="UniProtKB-SubCell"/>
</dbReference>
<dbReference type="GO" id="GO:0005886">
    <property type="term" value="C:plasma membrane"/>
    <property type="evidence" value="ECO:0000250"/>
    <property type="project" value="UniProtKB"/>
</dbReference>
<dbReference type="GO" id="GO:0019911">
    <property type="term" value="F:structural constituent of myelin sheath"/>
    <property type="evidence" value="ECO:0007669"/>
    <property type="project" value="TreeGrafter"/>
</dbReference>
<dbReference type="GO" id="GO:0061564">
    <property type="term" value="P:axon development"/>
    <property type="evidence" value="ECO:0007669"/>
    <property type="project" value="TreeGrafter"/>
</dbReference>
<dbReference type="GO" id="GO:0022010">
    <property type="term" value="P:central nervous system myelination"/>
    <property type="evidence" value="ECO:0007669"/>
    <property type="project" value="TreeGrafter"/>
</dbReference>
<dbReference type="InterPro" id="IPR001614">
    <property type="entry name" value="Myelin_PLP"/>
</dbReference>
<dbReference type="InterPro" id="IPR018237">
    <property type="entry name" value="Myelin_PLP_CS"/>
</dbReference>
<dbReference type="PANTHER" id="PTHR11683">
    <property type="entry name" value="MYELIN PROTEOLIPID"/>
    <property type="match status" value="1"/>
</dbReference>
<dbReference type="PANTHER" id="PTHR11683:SF11">
    <property type="entry name" value="MYELIN PROTEOLIPID PROTEIN"/>
    <property type="match status" value="1"/>
</dbReference>
<dbReference type="Pfam" id="PF01275">
    <property type="entry name" value="Myelin_PLP"/>
    <property type="match status" value="1"/>
</dbReference>
<dbReference type="PRINTS" id="PR00214">
    <property type="entry name" value="MYELINPLP"/>
</dbReference>
<dbReference type="SMART" id="SM00002">
    <property type="entry name" value="PLP"/>
    <property type="match status" value="1"/>
</dbReference>
<dbReference type="PROSITE" id="PS00575">
    <property type="entry name" value="MYELIN_PLP_1"/>
    <property type="match status" value="1"/>
</dbReference>
<dbReference type="PROSITE" id="PS01004">
    <property type="entry name" value="MYELIN_PLP_2"/>
    <property type="match status" value="1"/>
</dbReference>
<gene>
    <name type="primary">PLP1</name>
    <name type="ORF">QnpA-14715</name>
</gene>
<feature type="chain" id="PRO_0000159006" description="Myelin proteolipid protein">
    <location>
        <begin position="1"/>
        <end position="277"/>
    </location>
</feature>
<feature type="topological domain" description="Cytoplasmic" evidence="3">
    <location>
        <begin position="1"/>
        <end position="10"/>
    </location>
</feature>
<feature type="transmembrane region" description="Helical; Name=1" evidence="3">
    <location>
        <begin position="11"/>
        <end position="36"/>
    </location>
</feature>
<feature type="topological domain" description="Extracellular" evidence="3">
    <location>
        <begin position="37"/>
        <end position="59"/>
    </location>
</feature>
<feature type="transmembrane region" description="Helical; Name=2" evidence="3">
    <location>
        <begin position="60"/>
        <end position="88"/>
    </location>
</feature>
<feature type="topological domain" description="Cytoplasmic" evidence="3">
    <location>
        <begin position="89"/>
        <end position="151"/>
    </location>
</feature>
<feature type="transmembrane region" description="Helical; Name=3" evidence="3">
    <location>
        <begin position="152"/>
        <end position="178"/>
    </location>
</feature>
<feature type="topological domain" description="Extracellular" evidence="3">
    <location>
        <begin position="179"/>
        <end position="238"/>
    </location>
</feature>
<feature type="transmembrane region" description="Helical; Name=4" evidence="3">
    <location>
        <begin position="239"/>
        <end position="268"/>
    </location>
</feature>
<feature type="topological domain" description="Cytoplasmic" evidence="3">
    <location>
        <begin position="269"/>
        <end position="277"/>
    </location>
</feature>
<feature type="modified residue" description="Phosphoserine" evidence="2">
    <location>
        <position position="114"/>
    </location>
</feature>
<feature type="modified residue" description="Phosphothreonine" evidence="2">
    <location>
        <position position="116"/>
    </location>
</feature>
<feature type="modified residue" description="Phosphothreonine" evidence="2">
    <location>
        <position position="118"/>
    </location>
</feature>
<feature type="lipid moiety-binding region" description="S-palmitoyl cysteine" evidence="1">
    <location>
        <position position="6"/>
    </location>
</feature>
<feature type="lipid moiety-binding region" description="S-palmitoyl cysteine" evidence="1">
    <location>
        <position position="7"/>
    </location>
</feature>
<feature type="lipid moiety-binding region" description="S-palmitoyl cysteine" evidence="1">
    <location>
        <position position="10"/>
    </location>
</feature>
<feature type="lipid moiety-binding region" description="S-palmitoyl cysteine" evidence="1">
    <location>
        <position position="109"/>
    </location>
</feature>
<feature type="lipid moiety-binding region" description="S-palmitoyl cysteine" evidence="1">
    <location>
        <position position="141"/>
    </location>
</feature>
<feature type="lipid moiety-binding region" description="O-palmitoyl serine" evidence="1">
    <location>
        <position position="199"/>
    </location>
</feature>
<feature type="disulfide bond" evidence="1">
    <location>
        <begin position="184"/>
        <end position="228"/>
    </location>
</feature>
<feature type="disulfide bond" evidence="1">
    <location>
        <begin position="201"/>
        <end position="220"/>
    </location>
</feature>
<keyword id="KW-1003">Cell membrane</keyword>
<keyword id="KW-1015">Disulfide bond</keyword>
<keyword id="KW-0449">Lipoprotein</keyword>
<keyword id="KW-0472">Membrane</keyword>
<keyword id="KW-0564">Palmitate</keyword>
<keyword id="KW-0597">Phosphoprotein</keyword>
<keyword id="KW-1185">Reference proteome</keyword>
<keyword id="KW-0812">Transmembrane</keyword>
<keyword id="KW-1133">Transmembrane helix</keyword>
<comment type="function">
    <text evidence="1">This is the major myelin protein from the central nervous system. It plays an important role in the formation or maintenance of the multilamellar structure of myelin (By similarity).</text>
</comment>
<comment type="subcellular location">
    <subcellularLocation>
        <location evidence="1">Cell membrane</location>
        <topology evidence="1">Multi-pass membrane protein</topology>
    </subcellularLocation>
    <subcellularLocation>
        <location evidence="1">Myelin membrane</location>
    </subcellularLocation>
    <text evidence="1">Colocalizes with SIRT2 in internodal regions, at paranodal axoglial junction and Schmidt-Lanterman incisures of myelin sheat.</text>
</comment>
<comment type="similarity">
    <text evidence="4">Belongs to the myelin proteolipid protein family.</text>
</comment>
<accession>Q8HXW7</accession>
<organism>
    <name type="scientific">Macaca fascicularis</name>
    <name type="common">Crab-eating macaque</name>
    <name type="synonym">Cynomolgus monkey</name>
    <dbReference type="NCBI Taxonomy" id="9541"/>
    <lineage>
        <taxon>Eukaryota</taxon>
        <taxon>Metazoa</taxon>
        <taxon>Chordata</taxon>
        <taxon>Craniata</taxon>
        <taxon>Vertebrata</taxon>
        <taxon>Euteleostomi</taxon>
        <taxon>Mammalia</taxon>
        <taxon>Eutheria</taxon>
        <taxon>Euarchontoglires</taxon>
        <taxon>Primates</taxon>
        <taxon>Haplorrhini</taxon>
        <taxon>Catarrhini</taxon>
        <taxon>Cercopithecidae</taxon>
        <taxon>Cercopithecinae</taxon>
        <taxon>Macaca</taxon>
    </lineage>
</organism>
<name>MYPR_MACFA</name>
<reference key="1">
    <citation type="submission" date="2002-04" db="EMBL/GenBank/DDBJ databases">
        <title>Isolation and characterization of cDNA for macaque neurological disease genes.</title>
        <authorList>
            <person name="Kusuda J."/>
            <person name="Osada N."/>
            <person name="Hida M."/>
            <person name="Sugano S."/>
            <person name="Hashimoto K."/>
        </authorList>
    </citation>
    <scope>NUCLEOTIDE SEQUENCE [LARGE SCALE MRNA]</scope>
    <source>
        <tissue>Parietal cortex</tissue>
    </source>
</reference>
<proteinExistence type="evidence at transcript level"/>
<sequence>MGLLECCARCLVGAPFASLVATGLCFFGVALFCGCGHEALTGTEKLIETYFSKNYQDYEYLINVIHAFQYVIYGTASFFFLYGALLLAEGFYTTGAVRQIFGDYKTTICGKGLSATVTGGQKGRGSRGQHQAHSLERVRHCLGKWLGHPDKFVGITYALTVVWLLVFACSAVPVYIYFNTWTTCQSIAFPSKTSASIGSLCADARMYGVLPWNAFPGKVCGSNLLSICKTAEFQMTFHLFIAAFVGAAATLISLLTFMIAATYNFAVLKLMGRGTKF</sequence>